<name>MNMG_BARHE</name>
<sequence>MQLYDVVVIGGGHAGCEAAYASARAGAQTALITHKISALGTMSCNPAIGGLGKGHLVREIDAFDGLMGRAADAAGIQFRLLNRRKGPAVRGPRAQADRQLYKEAIQKLLQKQDNLILIEDEVIDLIVKDKSISGVILKKQGILPSGAVVLTTGTFLNGFIHIGDKTWAAGRMGEQSSIKLAERLKSYGINLGRLKTGTPARLSKKTIRWECLPKQQADENPVPFSLLTEKIEQPQIECAITRTNAQTHQIIRENIHRSALYSGNIEGLGPRYCPSIEDKIVKFGERDGHQIFLEPEGLNDDTIYPNGLSTSLPEDVQVSLLKTIEGLENVTILQSGYAIEYDFVNPQQLTKTLELRSLPGLFLAGQINGTTGYEEAAAQGLLAGLNAARKVGGLDEILISRSTAYIGVMVDDLVSRGVCEPYRMFTSRAEFRLSLRSDNADARLTPLAQQLGIVSKLRWECYQKKQQRLDQARSLCQELFLTPNQASAHGLQVNHDGIRRSAYDLLAYPHMSIERLSHIWPQLQSIDSKTVESVEIEAQYAVYLEKQAQDILALQRDERLEIPSSLDVQAISGLSNELKTKIQKISPRSIADAQKIDGMTPAALSLIITYIQRQRREKAKSA</sequence>
<accession>Q6G1K9</accession>
<protein>
    <recommendedName>
        <fullName evidence="1">tRNA uridine 5-carboxymethylaminomethyl modification enzyme MnmG</fullName>
    </recommendedName>
    <alternativeName>
        <fullName evidence="1">Glucose-inhibited division protein A</fullName>
    </alternativeName>
</protein>
<reference key="1">
    <citation type="journal article" date="2004" name="Proc. Natl. Acad. Sci. U.S.A.">
        <title>The louse-borne human pathogen Bartonella quintana is a genomic derivative of the zoonotic agent Bartonella henselae.</title>
        <authorList>
            <person name="Alsmark U.C.M."/>
            <person name="Frank A.C."/>
            <person name="Karlberg E.O."/>
            <person name="Legault B.-A."/>
            <person name="Ardell D.H."/>
            <person name="Canbaeck B."/>
            <person name="Eriksson A.-S."/>
            <person name="Naeslund A.K."/>
            <person name="Handley S.A."/>
            <person name="Huvet M."/>
            <person name="La Scola B."/>
            <person name="Holmberg M."/>
            <person name="Andersson S.G.E."/>
        </authorList>
    </citation>
    <scope>NUCLEOTIDE SEQUENCE [LARGE SCALE GENOMIC DNA]</scope>
    <source>
        <strain>ATCC 49882 / DSM 28221 / CCUG 30454 / Houston 1</strain>
    </source>
</reference>
<feature type="chain" id="PRO_0000117059" description="tRNA uridine 5-carboxymethylaminomethyl modification enzyme MnmG">
    <location>
        <begin position="1"/>
        <end position="622"/>
    </location>
</feature>
<feature type="binding site" evidence="1">
    <location>
        <begin position="10"/>
        <end position="15"/>
    </location>
    <ligand>
        <name>FAD</name>
        <dbReference type="ChEBI" id="CHEBI:57692"/>
    </ligand>
</feature>
<feature type="binding site" evidence="1">
    <location>
        <position position="122"/>
    </location>
    <ligand>
        <name>FAD</name>
        <dbReference type="ChEBI" id="CHEBI:57692"/>
    </ligand>
</feature>
<feature type="binding site" evidence="1">
    <location>
        <position position="177"/>
    </location>
    <ligand>
        <name>FAD</name>
        <dbReference type="ChEBI" id="CHEBI:57692"/>
    </ligand>
</feature>
<feature type="binding site" evidence="1">
    <location>
        <begin position="269"/>
        <end position="283"/>
    </location>
    <ligand>
        <name>NAD(+)</name>
        <dbReference type="ChEBI" id="CHEBI:57540"/>
    </ligand>
</feature>
<feature type="binding site" evidence="1">
    <location>
        <position position="366"/>
    </location>
    <ligand>
        <name>FAD</name>
        <dbReference type="ChEBI" id="CHEBI:57692"/>
    </ligand>
</feature>
<dbReference type="EMBL" id="BX897699">
    <property type="protein sequence ID" value="CAF28429.1"/>
    <property type="molecule type" value="Genomic_DNA"/>
</dbReference>
<dbReference type="RefSeq" id="WP_011181428.1">
    <property type="nucleotide sequence ID" value="NZ_LRIJ02000001.1"/>
</dbReference>
<dbReference type="SMR" id="Q6G1K9"/>
<dbReference type="PaxDb" id="283166-BH16680"/>
<dbReference type="EnsemblBacteria" id="CAF28429">
    <property type="protein sequence ID" value="CAF28429"/>
    <property type="gene ID" value="BH16680"/>
</dbReference>
<dbReference type="GeneID" id="92986287"/>
<dbReference type="KEGG" id="bhe:BH16680"/>
<dbReference type="eggNOG" id="COG0445">
    <property type="taxonomic scope" value="Bacteria"/>
</dbReference>
<dbReference type="OrthoDB" id="9815560at2"/>
<dbReference type="Proteomes" id="UP000000421">
    <property type="component" value="Chromosome"/>
</dbReference>
<dbReference type="GO" id="GO:0005829">
    <property type="term" value="C:cytosol"/>
    <property type="evidence" value="ECO:0007669"/>
    <property type="project" value="TreeGrafter"/>
</dbReference>
<dbReference type="GO" id="GO:0050660">
    <property type="term" value="F:flavin adenine dinucleotide binding"/>
    <property type="evidence" value="ECO:0007669"/>
    <property type="project" value="UniProtKB-UniRule"/>
</dbReference>
<dbReference type="GO" id="GO:0030488">
    <property type="term" value="P:tRNA methylation"/>
    <property type="evidence" value="ECO:0007669"/>
    <property type="project" value="TreeGrafter"/>
</dbReference>
<dbReference type="GO" id="GO:0002098">
    <property type="term" value="P:tRNA wobble uridine modification"/>
    <property type="evidence" value="ECO:0007669"/>
    <property type="project" value="InterPro"/>
</dbReference>
<dbReference type="FunFam" id="3.50.50.60:FF:000002">
    <property type="entry name" value="tRNA uridine 5-carboxymethylaminomethyl modification enzyme MnmG"/>
    <property type="match status" value="1"/>
</dbReference>
<dbReference type="Gene3D" id="3.50.50.60">
    <property type="entry name" value="FAD/NAD(P)-binding domain"/>
    <property type="match status" value="2"/>
</dbReference>
<dbReference type="Gene3D" id="1.10.150.570">
    <property type="entry name" value="GidA associated domain, C-terminal subdomain"/>
    <property type="match status" value="1"/>
</dbReference>
<dbReference type="Gene3D" id="1.10.10.1800">
    <property type="entry name" value="tRNA uridine 5-carboxymethylaminomethyl modification enzyme MnmG/GidA"/>
    <property type="match status" value="1"/>
</dbReference>
<dbReference type="HAMAP" id="MF_00129">
    <property type="entry name" value="MnmG_GidA"/>
    <property type="match status" value="1"/>
</dbReference>
<dbReference type="InterPro" id="IPR036188">
    <property type="entry name" value="FAD/NAD-bd_sf"/>
</dbReference>
<dbReference type="InterPro" id="IPR049312">
    <property type="entry name" value="GIDA_C_N"/>
</dbReference>
<dbReference type="InterPro" id="IPR004416">
    <property type="entry name" value="MnmG"/>
</dbReference>
<dbReference type="InterPro" id="IPR002218">
    <property type="entry name" value="MnmG-rel"/>
</dbReference>
<dbReference type="InterPro" id="IPR020595">
    <property type="entry name" value="MnmG-rel_CS"/>
</dbReference>
<dbReference type="InterPro" id="IPR026904">
    <property type="entry name" value="MnmG_C"/>
</dbReference>
<dbReference type="InterPro" id="IPR047001">
    <property type="entry name" value="MnmG_C_subdom"/>
</dbReference>
<dbReference type="InterPro" id="IPR044920">
    <property type="entry name" value="MnmG_C_subdom_sf"/>
</dbReference>
<dbReference type="InterPro" id="IPR040131">
    <property type="entry name" value="MnmG_N"/>
</dbReference>
<dbReference type="NCBIfam" id="TIGR00136">
    <property type="entry name" value="mnmG_gidA"/>
    <property type="match status" value="1"/>
</dbReference>
<dbReference type="PANTHER" id="PTHR11806">
    <property type="entry name" value="GLUCOSE INHIBITED DIVISION PROTEIN A"/>
    <property type="match status" value="1"/>
</dbReference>
<dbReference type="PANTHER" id="PTHR11806:SF0">
    <property type="entry name" value="PROTEIN MTO1 HOMOLOG, MITOCHONDRIAL"/>
    <property type="match status" value="1"/>
</dbReference>
<dbReference type="Pfam" id="PF01134">
    <property type="entry name" value="GIDA"/>
    <property type="match status" value="1"/>
</dbReference>
<dbReference type="Pfam" id="PF21680">
    <property type="entry name" value="GIDA_C_1st"/>
    <property type="match status" value="1"/>
</dbReference>
<dbReference type="Pfam" id="PF13932">
    <property type="entry name" value="SAM_GIDA_C"/>
    <property type="match status" value="1"/>
</dbReference>
<dbReference type="SMART" id="SM01228">
    <property type="entry name" value="GIDA_assoc_3"/>
    <property type="match status" value="1"/>
</dbReference>
<dbReference type="SUPFAM" id="SSF51905">
    <property type="entry name" value="FAD/NAD(P)-binding domain"/>
    <property type="match status" value="1"/>
</dbReference>
<dbReference type="PROSITE" id="PS01280">
    <property type="entry name" value="GIDA_1"/>
    <property type="match status" value="1"/>
</dbReference>
<dbReference type="PROSITE" id="PS01281">
    <property type="entry name" value="GIDA_2"/>
    <property type="match status" value="1"/>
</dbReference>
<proteinExistence type="inferred from homology"/>
<organism>
    <name type="scientific">Bartonella henselae (strain ATCC 49882 / DSM 28221 / CCUG 30454 / Houston 1)</name>
    <name type="common">Rochalimaea henselae</name>
    <dbReference type="NCBI Taxonomy" id="283166"/>
    <lineage>
        <taxon>Bacteria</taxon>
        <taxon>Pseudomonadati</taxon>
        <taxon>Pseudomonadota</taxon>
        <taxon>Alphaproteobacteria</taxon>
        <taxon>Hyphomicrobiales</taxon>
        <taxon>Bartonellaceae</taxon>
        <taxon>Bartonella</taxon>
    </lineage>
</organism>
<evidence type="ECO:0000255" key="1">
    <source>
        <dbReference type="HAMAP-Rule" id="MF_00129"/>
    </source>
</evidence>
<comment type="function">
    <text evidence="1">NAD-binding protein involved in the addition of a carboxymethylaminomethyl (cmnm) group at the wobble position (U34) of certain tRNAs, forming tRNA-cmnm(5)s(2)U34.</text>
</comment>
<comment type="cofactor">
    <cofactor evidence="1">
        <name>FAD</name>
        <dbReference type="ChEBI" id="CHEBI:57692"/>
    </cofactor>
</comment>
<comment type="subunit">
    <text evidence="1">Homodimer. Heterotetramer of two MnmE and two MnmG subunits.</text>
</comment>
<comment type="subcellular location">
    <subcellularLocation>
        <location evidence="1">Cytoplasm</location>
    </subcellularLocation>
</comment>
<comment type="similarity">
    <text evidence="1">Belongs to the MnmG family.</text>
</comment>
<keyword id="KW-0963">Cytoplasm</keyword>
<keyword id="KW-0274">FAD</keyword>
<keyword id="KW-0285">Flavoprotein</keyword>
<keyword id="KW-0520">NAD</keyword>
<keyword id="KW-0819">tRNA processing</keyword>
<gene>
    <name evidence="1" type="primary">mnmG</name>
    <name evidence="1" type="synonym">gidA</name>
    <name type="ordered locus">BH16680</name>
</gene>